<gene>
    <name type="primary">csgG</name>
    <name type="ordered locus">Z1670</name>
    <name type="ordered locus">ECs1414</name>
</gene>
<organism>
    <name type="scientific">Escherichia coli O157:H7</name>
    <dbReference type="NCBI Taxonomy" id="83334"/>
    <lineage>
        <taxon>Bacteria</taxon>
        <taxon>Pseudomonadati</taxon>
        <taxon>Pseudomonadota</taxon>
        <taxon>Gammaproteobacteria</taxon>
        <taxon>Enterobacterales</taxon>
        <taxon>Enterobacteriaceae</taxon>
        <taxon>Escherichia</taxon>
    </lineage>
</organism>
<evidence type="ECO:0000250" key="1"/>
<evidence type="ECO:0000255" key="2">
    <source>
        <dbReference type="PROSITE-ProRule" id="PRU00303"/>
    </source>
</evidence>
<evidence type="ECO:0000305" key="3"/>
<comment type="function">
    <text evidence="1">May be involved in the biogenesis of curli organelles.</text>
</comment>
<comment type="interaction">
    <interactant intactId="EBI-15943633">
        <id>P0AEA4</id>
    </interactant>
    <interactant intactId="EBI-15943633">
        <id>P0AEA4</id>
        <label>csgG</label>
    </interactant>
    <organismsDiffer>false</organismsDiffer>
    <experiments>3</experiments>
</comment>
<comment type="subcellular location">
    <subcellularLocation>
        <location evidence="2">Cell membrane</location>
        <topology evidence="2">Lipid-anchor</topology>
    </subcellularLocation>
</comment>
<comment type="similarity">
    <text evidence="3">Belongs to the CsgG family.</text>
</comment>
<protein>
    <recommendedName>
        <fullName>Curli production assembly/transport component CsgG</fullName>
    </recommendedName>
</protein>
<keyword id="KW-1003">Cell membrane</keyword>
<keyword id="KW-0449">Lipoprotein</keyword>
<keyword id="KW-0472">Membrane</keyword>
<keyword id="KW-0564">Palmitate</keyword>
<keyword id="KW-1185">Reference proteome</keyword>
<keyword id="KW-0732">Signal</keyword>
<dbReference type="EMBL" id="AE005174">
    <property type="protein sequence ID" value="AAG55783.1"/>
    <property type="molecule type" value="Genomic_DNA"/>
</dbReference>
<dbReference type="EMBL" id="BA000007">
    <property type="protein sequence ID" value="BAB34837.1"/>
    <property type="molecule type" value="Genomic_DNA"/>
</dbReference>
<dbReference type="PIR" id="C85665">
    <property type="entry name" value="C85665"/>
</dbReference>
<dbReference type="PIR" id="F90805">
    <property type="entry name" value="F90805"/>
</dbReference>
<dbReference type="RefSeq" id="NP_309441.1">
    <property type="nucleotide sequence ID" value="NC_002695.1"/>
</dbReference>
<dbReference type="RefSeq" id="WP_001189321.1">
    <property type="nucleotide sequence ID" value="NZ_VOAI01000018.1"/>
</dbReference>
<dbReference type="SMR" id="P0AEA4"/>
<dbReference type="DIP" id="DIP-59142N"/>
<dbReference type="STRING" id="155864.Z1670"/>
<dbReference type="GeneID" id="75203625"/>
<dbReference type="GeneID" id="914144"/>
<dbReference type="KEGG" id="ece:Z1670"/>
<dbReference type="KEGG" id="ecs:ECs_1414"/>
<dbReference type="PATRIC" id="fig|386585.9.peg.1514"/>
<dbReference type="eggNOG" id="COG1462">
    <property type="taxonomic scope" value="Bacteria"/>
</dbReference>
<dbReference type="HOGENOM" id="CLU_056911_0_0_6"/>
<dbReference type="OMA" id="TQGAASM"/>
<dbReference type="Proteomes" id="UP000000558">
    <property type="component" value="Chromosome"/>
</dbReference>
<dbReference type="Proteomes" id="UP000002519">
    <property type="component" value="Chromosome"/>
</dbReference>
<dbReference type="GO" id="GO:0030288">
    <property type="term" value="C:outer membrane-bounded periplasmic space"/>
    <property type="evidence" value="ECO:0007669"/>
    <property type="project" value="InterPro"/>
</dbReference>
<dbReference type="GO" id="GO:0005886">
    <property type="term" value="C:plasma membrane"/>
    <property type="evidence" value="ECO:0007669"/>
    <property type="project" value="UniProtKB-SubCell"/>
</dbReference>
<dbReference type="GO" id="GO:0042802">
    <property type="term" value="F:identical protein binding"/>
    <property type="evidence" value="ECO:0000353"/>
    <property type="project" value="IntAct"/>
</dbReference>
<dbReference type="FunFam" id="3.40.50.10610:FF:000001">
    <property type="entry name" value="Curli production assembly/transport component CsgG"/>
    <property type="match status" value="1"/>
</dbReference>
<dbReference type="FunFam" id="3.40.50.10610:FF:000003">
    <property type="entry name" value="Curli production assembly/transport component CsgG"/>
    <property type="match status" value="1"/>
</dbReference>
<dbReference type="Gene3D" id="3.40.50.10610">
    <property type="entry name" value="ABC-type transport auxiliary lipoprotein component"/>
    <property type="match status" value="2"/>
</dbReference>
<dbReference type="InterPro" id="IPR005534">
    <property type="entry name" value="Curli_assmbl/transp-comp_CsgG"/>
</dbReference>
<dbReference type="NCBIfam" id="NF011731">
    <property type="entry name" value="PRK15184.1"/>
    <property type="match status" value="1"/>
</dbReference>
<dbReference type="PANTHER" id="PTHR41164">
    <property type="entry name" value="CURLI PRODUCTION ASSEMBLY/TRANSPORT COMPONENT CSGG"/>
    <property type="match status" value="1"/>
</dbReference>
<dbReference type="PANTHER" id="PTHR41164:SF1">
    <property type="entry name" value="CURLI PRODUCTION ASSEMBLY_TRANSPORT COMPONENT CSGG"/>
    <property type="match status" value="1"/>
</dbReference>
<dbReference type="Pfam" id="PF03783">
    <property type="entry name" value="CsgG"/>
    <property type="match status" value="1"/>
</dbReference>
<dbReference type="PROSITE" id="PS51257">
    <property type="entry name" value="PROKAR_LIPOPROTEIN"/>
    <property type="match status" value="1"/>
</dbReference>
<feature type="signal peptide" evidence="2">
    <location>
        <begin position="1"/>
        <end position="15"/>
    </location>
</feature>
<feature type="chain" id="PRO_0000043389" description="Curli production assembly/transport component CsgG">
    <location>
        <begin position="16"/>
        <end position="277"/>
    </location>
</feature>
<feature type="lipid moiety-binding region" description="N-palmitoyl cysteine" evidence="2">
    <location>
        <position position="16"/>
    </location>
</feature>
<feature type="lipid moiety-binding region" description="S-diacylglycerol cysteine" evidence="2">
    <location>
        <position position="16"/>
    </location>
</feature>
<proteinExistence type="evidence at protein level"/>
<name>CSGG_ECO57</name>
<sequence length="277" mass="30557">MQRLFLLVAVMLLSGCLTAPPKEAARPTLMPRAQSYKDLTHLPAPTGKIFVSVYNIQDETGQFKPYPASNFSTAVPQSATAMLVTALKDSRWFIPLERQGLQNLLNERKIIRAAQENGTVAINNRIPLQSLTAANIMVEGSIIGYESNVKSGGVGARYFGIGADTQYQLDQIAVNLRVVNVSTGEILSSVNTSKTILSYEVQAGVFRFIDYQRLLEGEVGYTSNEPVMLCLMSAIETGVIFLINDGIDRGLWDLQNKAERQNDILVKYRHMSVPPES</sequence>
<reference key="1">
    <citation type="journal article" date="2001" name="Nature">
        <title>Genome sequence of enterohaemorrhagic Escherichia coli O157:H7.</title>
        <authorList>
            <person name="Perna N.T."/>
            <person name="Plunkett G. III"/>
            <person name="Burland V."/>
            <person name="Mau B."/>
            <person name="Glasner J.D."/>
            <person name="Rose D.J."/>
            <person name="Mayhew G.F."/>
            <person name="Evans P.S."/>
            <person name="Gregor J."/>
            <person name="Kirkpatrick H.A."/>
            <person name="Posfai G."/>
            <person name="Hackett J."/>
            <person name="Klink S."/>
            <person name="Boutin A."/>
            <person name="Shao Y."/>
            <person name="Miller L."/>
            <person name="Grotbeck E.J."/>
            <person name="Davis N.W."/>
            <person name="Lim A."/>
            <person name="Dimalanta E.T."/>
            <person name="Potamousis K."/>
            <person name="Apodaca J."/>
            <person name="Anantharaman T.S."/>
            <person name="Lin J."/>
            <person name="Yen G."/>
            <person name="Schwartz D.C."/>
            <person name="Welch R.A."/>
            <person name="Blattner F.R."/>
        </authorList>
    </citation>
    <scope>NUCLEOTIDE SEQUENCE [LARGE SCALE GENOMIC DNA]</scope>
    <source>
        <strain>O157:H7 / EDL933 / ATCC 700927 / EHEC</strain>
    </source>
</reference>
<reference key="2">
    <citation type="journal article" date="2001" name="DNA Res.">
        <title>Complete genome sequence of enterohemorrhagic Escherichia coli O157:H7 and genomic comparison with a laboratory strain K-12.</title>
        <authorList>
            <person name="Hayashi T."/>
            <person name="Makino K."/>
            <person name="Ohnishi M."/>
            <person name="Kurokawa K."/>
            <person name="Ishii K."/>
            <person name="Yokoyama K."/>
            <person name="Han C.-G."/>
            <person name="Ohtsubo E."/>
            <person name="Nakayama K."/>
            <person name="Murata T."/>
            <person name="Tanaka M."/>
            <person name="Tobe T."/>
            <person name="Iida T."/>
            <person name="Takami H."/>
            <person name="Honda T."/>
            <person name="Sasakawa C."/>
            <person name="Ogasawara N."/>
            <person name="Yasunaga T."/>
            <person name="Kuhara S."/>
            <person name="Shiba T."/>
            <person name="Hattori M."/>
            <person name="Shinagawa H."/>
        </authorList>
    </citation>
    <scope>NUCLEOTIDE SEQUENCE [LARGE SCALE GENOMIC DNA]</scope>
    <source>
        <strain>O157:H7 / Sakai / RIMD 0509952 / EHEC</strain>
    </source>
</reference>
<accession>P0AEA4</accession>
<accession>P52103</accession>